<organism>
    <name type="scientific">Staphylococcus epidermidis</name>
    <dbReference type="NCBI Taxonomy" id="1282"/>
    <lineage>
        <taxon>Bacteria</taxon>
        <taxon>Bacillati</taxon>
        <taxon>Bacillota</taxon>
        <taxon>Bacilli</taxon>
        <taxon>Bacillales</taxon>
        <taxon>Staphylococcaceae</taxon>
        <taxon>Staphylococcus</taxon>
    </lineage>
</organism>
<proteinExistence type="evidence at protein level"/>
<reference key="1">
    <citation type="journal article" date="1998" name="Infect. Immun.">
        <title>A fibrinogen-binding protein of Staphylococcus epidermidis.</title>
        <authorList>
            <person name="Nilsson M."/>
            <person name="Frykberg L."/>
            <person name="Flock J.-I."/>
            <person name="Pei L."/>
            <person name="Lindberg M."/>
            <person name="Guss B."/>
        </authorList>
    </citation>
    <scope>NUCLEOTIDE SEQUENCE [GENOMIC DNA]</scope>
    <scope>FUNCTION</scope>
    <source>
        <strain>HB</strain>
    </source>
</reference>
<reference key="2">
    <citation type="journal article" date="1999" name="Infect. Immun.">
        <title>Functional studies of a fibrinogen binding protein from Staphylococcus epidermidis.</title>
        <authorList>
            <person name="Pei L."/>
            <person name="Palma M."/>
            <person name="Nilsson M."/>
            <person name="Guss B."/>
            <person name="Flock J.-I."/>
        </authorList>
    </citation>
    <scope>INTERACTION WITH THE BETA-CHAIN OF FIBRINOGEN</scope>
    <source>
        <strain>HB</strain>
    </source>
</reference>
<reference key="3">
    <citation type="journal article" date="2001" name="Microbiology">
        <title>The fbe (sdrG) protein of Staphylococcus epidermidis HB promotes bacterial adherence to fibrinogen.</title>
        <authorList>
            <person name="Hartford O."/>
            <person name="O'Brien L."/>
            <person name="Schofield K."/>
            <person name="Wells J."/>
            <person name="Foster T.J."/>
        </authorList>
    </citation>
    <scope>FUNCTION</scope>
    <source>
        <strain>HB</strain>
    </source>
</reference>
<reference key="4">
    <citation type="journal article" date="2007" name="Infect. Immun.">
        <title>Pathogenic implication of a fibrinogen-binding protein of Staphylococcus epidermidis in a rat intravascular catheter-associated infection model.</title>
        <authorList>
            <person name="Guo B."/>
            <person name="Zhao X."/>
            <person name="Shi Y."/>
            <person name="Zhu D."/>
            <person name="Zhang Y."/>
        </authorList>
    </citation>
    <scope>ROLE IN PATHOGENICITY</scope>
    <source>
        <strain>HB</strain>
    </source>
</reference>
<protein>
    <recommendedName>
        <fullName>Fibrinogen-binding protein</fullName>
    </recommendedName>
</protein>
<comment type="function">
    <text evidence="5 6 7">Promotes bacterial attachment to both soluble and immobilized forms of fibrinogen in a dose-dependent manner. This binding occurs through the beta-chain of human fibrinogen. Could contribute to the initiation of foreign-body infection by allowing bacteria to adhere to biomaterial surfaces that have become coated with host proteins after implantation. Is important in the pathogenesis of central venous catheter (CVC)-associated infection model.</text>
</comment>
<comment type="subcellular location">
    <subcellularLocation>
        <location evidence="3">Secreted</location>
        <location evidence="3">Cell wall</location>
        <topology evidence="3">Peptidoglycan-anchor</topology>
    </subcellularLocation>
</comment>
<comment type="miscellaneous">
    <text>The addition of calcium stimulates the interaction between fbe and fibrinogen, but this effect could be due to calcium binding to fibrinogen rather than to fbe.</text>
</comment>
<comment type="similarity">
    <text evidence="8">Belongs to the serine-aspartate repeat-containing protein (SDr) family.</text>
</comment>
<accession>O70022</accession>
<gene>
    <name type="primary">fbe</name>
</gene>
<keyword id="KW-0106">Calcium</keyword>
<keyword id="KW-0134">Cell wall</keyword>
<keyword id="KW-0479">Metal-binding</keyword>
<keyword id="KW-0572">Peptidoglycan-anchor</keyword>
<keyword id="KW-0677">Repeat</keyword>
<keyword id="KW-0964">Secreted</keyword>
<keyword id="KW-0732">Signal</keyword>
<keyword id="KW-0843">Virulence</keyword>
<feature type="signal peptide" evidence="2">
    <location>
        <begin position="1"/>
        <end position="51"/>
    </location>
</feature>
<feature type="chain" id="PRO_0000294170" description="Fibrinogen-binding protein">
    <location>
        <begin position="52"/>
        <end position="1056"/>
    </location>
</feature>
<feature type="propeptide" id="PRO_0000294171" description="Removed by sortase" evidence="3">
    <location>
        <begin position="1057"/>
        <end position="1092"/>
    </location>
</feature>
<feature type="domain" description="CNA-B 1">
    <location>
        <begin position="600"/>
        <end position="713"/>
    </location>
</feature>
<feature type="domain" description="CNA-B 2">
    <location>
        <begin position="714"/>
        <end position="824"/>
    </location>
</feature>
<feature type="region of interest" description="Disordered" evidence="4">
    <location>
        <begin position="50"/>
        <end position="236"/>
    </location>
</feature>
<feature type="region of interest" description="Ligand binding A region">
    <location>
        <begin position="52"/>
        <end position="599"/>
    </location>
</feature>
<feature type="region of interest" description="Interaction with human fibrinogen">
    <location>
        <begin position="579"/>
        <end position="590"/>
    </location>
</feature>
<feature type="region of interest" description="Disordered" evidence="4">
    <location>
        <begin position="780"/>
        <end position="1068"/>
    </location>
</feature>
<feature type="short sequence motif" description="LPXTG sorting signal" evidence="3">
    <location>
        <begin position="1053"/>
        <end position="1057"/>
    </location>
</feature>
<feature type="compositionally biased region" description="Basic and acidic residues" evidence="4">
    <location>
        <begin position="50"/>
        <end position="63"/>
    </location>
</feature>
<feature type="compositionally biased region" description="Acidic residues" evidence="4">
    <location>
        <begin position="64"/>
        <end position="76"/>
    </location>
</feature>
<feature type="compositionally biased region" description="Low complexity" evidence="4">
    <location>
        <begin position="84"/>
        <end position="98"/>
    </location>
</feature>
<feature type="compositionally biased region" description="Basic and acidic residues" evidence="4">
    <location>
        <begin position="99"/>
        <end position="119"/>
    </location>
</feature>
<feature type="compositionally biased region" description="Polar residues" evidence="4">
    <location>
        <begin position="120"/>
        <end position="140"/>
    </location>
</feature>
<feature type="compositionally biased region" description="Basic and acidic residues" evidence="4">
    <location>
        <begin position="141"/>
        <end position="151"/>
    </location>
</feature>
<feature type="compositionally biased region" description="Polar residues" evidence="4">
    <location>
        <begin position="160"/>
        <end position="170"/>
    </location>
</feature>
<feature type="compositionally biased region" description="Basic and acidic residues" evidence="4">
    <location>
        <begin position="195"/>
        <end position="220"/>
    </location>
</feature>
<feature type="compositionally biased region" description="Acidic residues" evidence="4">
    <location>
        <begin position="791"/>
        <end position="801"/>
    </location>
</feature>
<feature type="compositionally biased region" description="Basic and acidic residues" evidence="4">
    <location>
        <begin position="802"/>
        <end position="814"/>
    </location>
</feature>
<feature type="compositionally biased region" description="Acidic residues" evidence="4">
    <location>
        <begin position="820"/>
        <end position="1039"/>
    </location>
</feature>
<feature type="binding site" evidence="1">
    <location>
        <position position="294"/>
    </location>
    <ligand>
        <name>Ca(2+)</name>
        <dbReference type="ChEBI" id="CHEBI:29108"/>
    </ligand>
</feature>
<feature type="binding site" evidence="1">
    <location>
        <position position="299"/>
    </location>
    <ligand>
        <name>Ca(2+)</name>
        <dbReference type="ChEBI" id="CHEBI:29108"/>
    </ligand>
</feature>
<feature type="binding site" evidence="1">
    <location>
        <position position="302"/>
    </location>
    <ligand>
        <name>Ca(2+)</name>
        <dbReference type="ChEBI" id="CHEBI:29108"/>
    </ligand>
</feature>
<feature type="binding site" evidence="1">
    <location>
        <position position="309"/>
    </location>
    <ligand>
        <name>Ca(2+)</name>
        <dbReference type="ChEBI" id="CHEBI:29108"/>
    </ligand>
</feature>
<feature type="modified residue" description="Pentaglycyl murein peptidoglycan amidated threonine" evidence="3">
    <location>
        <position position="1056"/>
    </location>
</feature>
<name>FBE_STAEP</name>
<dbReference type="EMBL" id="Y17116">
    <property type="protein sequence ID" value="CAA76638.1"/>
    <property type="molecule type" value="Genomic_DNA"/>
</dbReference>
<dbReference type="PIR" id="T30214">
    <property type="entry name" value="T30214"/>
</dbReference>
<dbReference type="SMR" id="O70022"/>
<dbReference type="GO" id="GO:0005576">
    <property type="term" value="C:extracellular region"/>
    <property type="evidence" value="ECO:0007669"/>
    <property type="project" value="UniProtKB-KW"/>
</dbReference>
<dbReference type="GO" id="GO:0046872">
    <property type="term" value="F:metal ion binding"/>
    <property type="evidence" value="ECO:0007669"/>
    <property type="project" value="UniProtKB-KW"/>
</dbReference>
<dbReference type="GO" id="GO:0007155">
    <property type="term" value="P:cell adhesion"/>
    <property type="evidence" value="ECO:0007669"/>
    <property type="project" value="InterPro"/>
</dbReference>
<dbReference type="Gene3D" id="2.60.40.1280">
    <property type="match status" value="1"/>
</dbReference>
<dbReference type="Gene3D" id="2.60.40.1290">
    <property type="match status" value="1"/>
</dbReference>
<dbReference type="Gene3D" id="2.60.40.10">
    <property type="entry name" value="Immunoglobulins"/>
    <property type="match status" value="2"/>
</dbReference>
<dbReference type="InterPro" id="IPR011266">
    <property type="entry name" value="Adhesin_Fg-bd_dom_2"/>
</dbReference>
<dbReference type="InterPro" id="IPR008966">
    <property type="entry name" value="Adhesion_dom_sf"/>
</dbReference>
<dbReference type="InterPro" id="IPR011252">
    <property type="entry name" value="Fibrogen-bd_dom1"/>
</dbReference>
<dbReference type="InterPro" id="IPR013783">
    <property type="entry name" value="Ig-like_fold"/>
</dbReference>
<dbReference type="InterPro" id="IPR019931">
    <property type="entry name" value="LPXTG_anchor"/>
</dbReference>
<dbReference type="InterPro" id="IPR050972">
    <property type="entry name" value="SDr-like"/>
</dbReference>
<dbReference type="InterPro" id="IPR033764">
    <property type="entry name" value="Sdr_B"/>
</dbReference>
<dbReference type="InterPro" id="IPR041171">
    <property type="entry name" value="SDR_Ig"/>
</dbReference>
<dbReference type="InterPro" id="IPR005877">
    <property type="entry name" value="YSIRK_signal_dom"/>
</dbReference>
<dbReference type="NCBIfam" id="TIGR01168">
    <property type="entry name" value="YSIRK_signal"/>
    <property type="match status" value="1"/>
</dbReference>
<dbReference type="PANTHER" id="PTHR34403">
    <property type="entry name" value="TOL-PAL SYSTEM PROTEIN TOLA"/>
    <property type="match status" value="1"/>
</dbReference>
<dbReference type="PANTHER" id="PTHR34403:SF8">
    <property type="entry name" value="TOL-PAL SYSTEM PROTEIN TOLA"/>
    <property type="match status" value="1"/>
</dbReference>
<dbReference type="Pfam" id="PF17961">
    <property type="entry name" value="Big_8"/>
    <property type="match status" value="1"/>
</dbReference>
<dbReference type="Pfam" id="PF00746">
    <property type="entry name" value="Gram_pos_anchor"/>
    <property type="match status" value="1"/>
</dbReference>
<dbReference type="Pfam" id="PF17210">
    <property type="entry name" value="SdrD_B"/>
    <property type="match status" value="2"/>
</dbReference>
<dbReference type="Pfam" id="PF10425">
    <property type="entry name" value="SdrG_C_C"/>
    <property type="match status" value="1"/>
</dbReference>
<dbReference type="Pfam" id="PF04650">
    <property type="entry name" value="YSIRK_signal"/>
    <property type="match status" value="1"/>
</dbReference>
<dbReference type="SUPFAM" id="SSF49401">
    <property type="entry name" value="Bacterial adhesins"/>
    <property type="match status" value="2"/>
</dbReference>
<dbReference type="SUPFAM" id="SSF117074">
    <property type="entry name" value="Hypothetical protein PA1324"/>
    <property type="match status" value="2"/>
</dbReference>
<dbReference type="PROSITE" id="PS50847">
    <property type="entry name" value="GRAM_POS_ANCHORING"/>
    <property type="match status" value="1"/>
</dbReference>
<sequence length="1092" mass="119293">MINKKNNLLTKKKPIANKSNKYAIRKFTVGTASIVIGATLLFGLGHNEAKAEENSVQDVKDSNTDDELSDSNDQSSDEEKNDVINNNQSINTDDNNQIIKKEETNNYDGIEKRSEDRTESTTNVDENEATFLQKTPQDNTHLTEEEVKESSSVESSNSSIDTAQQPSHTTINREESVQTSDNVEDSHVSDFANSKIKESNTESGKEENTIEQPNKVKEDSTTSQPSGYTNIDEKISNQDELLNLPINEYENKARPLSTTSAQPSIKRVTVNQLAAEQGSNVNHLIKVTDQSITEGYDDSEGVIKAHDAENLIYDVTFEVDDKVKSGDTMTVDIDKNTVPSDLTDSFTIPKIKDNSGEIIATGTYDNKNKQITYTFTDYVDKYENIKAHLKLTSYIDKSKVPNNNTKLDVEYKTALSSVNKTITVEYQRPNENRTANLQSMFTNIDTKNHTVEQTIYINPLRYSAKETNVNISGNGDEGSTIIDDSTIIKVYKVGDNQNLPDSNRIYDYSEYEDVTNDDYAQLGNNNDVNINFGNIDSPYIIKVISKYDPNKDDYTTIQQTVTMQTTINEYTGEFRTASYDNTIAFSTSSGQGQGDLPPEKTYKIGDYVWEDVDKDGIQNTNDNEKPLSNVLVTLTYPDGTSKSVRTDEDGKYQFDGLKNGLTYKITFETPEGYTPTLKHSGTNPALDSEGNSVWVTINGQDDMTIDSGFYQTPKYSLGNYVWYDTNKDGIQGDDEKGISGVKVTLKDENGNIISTTTTDENGKYQFDNLNSGNYIVHFDKPSGMTQTTTDSGDDDEQDADGEEVHVTITDHDDFSIDNGYYDDESDSDSDSDSDSDSDSDSDSDSDSDSDSDSDSDSDSDSDSDSDSDSDSDSDSDSDSDSDSDSDSDSDSDSDSDSDSDSDSDSDSDSDSDSDSDSDSDSDSDSDSDSDSDSDSDSDSDSDSDSDSDSDSDSDSDSDSDSDSDSDSDSDSDSDSDSDSDSDSDSDSDSDSDSDSDSDSDSDSDSDSDSDSVSDSDSDSDSDSGSDSDSDSDSDSDNDSDLGNSSDKSTKDKLPDTGANEDYGSKGTLLGTLFAGLGALLLGKRRKNRKNKN</sequence>
<evidence type="ECO:0000250" key="1">
    <source>
        <dbReference type="UniProtKB" id="Q9KI13"/>
    </source>
</evidence>
<evidence type="ECO:0000255" key="2"/>
<evidence type="ECO:0000255" key="3">
    <source>
        <dbReference type="PROSITE-ProRule" id="PRU00477"/>
    </source>
</evidence>
<evidence type="ECO:0000256" key="4">
    <source>
        <dbReference type="SAM" id="MobiDB-lite"/>
    </source>
</evidence>
<evidence type="ECO:0000269" key="5">
    <source>
    </source>
</evidence>
<evidence type="ECO:0000269" key="6">
    <source>
    </source>
</evidence>
<evidence type="ECO:0000269" key="7">
    <source>
    </source>
</evidence>
<evidence type="ECO:0000305" key="8"/>